<comment type="function">
    <text evidence="2">Catalyzes the hydrolysis of dihydroneopterin triphosphate to dihydroneopterin monophosphate and pyrophosphate. Required for efficient folate biosynthesis. Can also hydrolyze nucleoside triphosphates with a preference for dATP.</text>
</comment>
<comment type="catalytic activity">
    <reaction evidence="2">
        <text>7,8-dihydroneopterin 3'-triphosphate + H2O = 7,8-dihydroneopterin 3'-phosphate + diphosphate + H(+)</text>
        <dbReference type="Rhea" id="RHEA:25302"/>
        <dbReference type="ChEBI" id="CHEBI:15377"/>
        <dbReference type="ChEBI" id="CHEBI:15378"/>
        <dbReference type="ChEBI" id="CHEBI:33019"/>
        <dbReference type="ChEBI" id="CHEBI:58462"/>
        <dbReference type="ChEBI" id="CHEBI:58762"/>
        <dbReference type="EC" id="3.6.1.67"/>
    </reaction>
</comment>
<comment type="cofactor">
    <cofactor evidence="2">
        <name>Mg(2+)</name>
        <dbReference type="ChEBI" id="CHEBI:18420"/>
    </cofactor>
    <text evidence="2">Binds 1 Mg(2+) ion per subunit.</text>
</comment>
<comment type="similarity">
    <text evidence="5">Belongs to the Nudix hydrolase family.</text>
</comment>
<comment type="sequence caution" evidence="5">
    <conflict type="erroneous initiation">
        <sequence resource="EMBL-CDS" id="BAB35998"/>
    </conflict>
    <text>Extended N-terminus.</text>
</comment>
<sequence>MKDKVYKRPVSILVVIYAQDTKRVLMLQRRDDPDFWQSVTGSVEEGETAPQAAMREVKEEVTIDVVAEQLTLIDCQRTVEFEIFSHLRHRYAPGVTRNTESWFCLALPHERQIVFTEHLAYKWLDAPAAAALTKSWSNRQAIEQFVINAA</sequence>
<accession>P0AFC1</accession>
<accession>P24236</accession>
<reference key="1">
    <citation type="journal article" date="2001" name="Nature">
        <title>Genome sequence of enterohaemorrhagic Escherichia coli O157:H7.</title>
        <authorList>
            <person name="Perna N.T."/>
            <person name="Plunkett G. III"/>
            <person name="Burland V."/>
            <person name="Mau B."/>
            <person name="Glasner J.D."/>
            <person name="Rose D.J."/>
            <person name="Mayhew G.F."/>
            <person name="Evans P.S."/>
            <person name="Gregor J."/>
            <person name="Kirkpatrick H.A."/>
            <person name="Posfai G."/>
            <person name="Hackett J."/>
            <person name="Klink S."/>
            <person name="Boutin A."/>
            <person name="Shao Y."/>
            <person name="Miller L."/>
            <person name="Grotbeck E.J."/>
            <person name="Davis N.W."/>
            <person name="Lim A."/>
            <person name="Dimalanta E.T."/>
            <person name="Potamousis K."/>
            <person name="Apodaca J."/>
            <person name="Anantharaman T.S."/>
            <person name="Lin J."/>
            <person name="Yen G."/>
            <person name="Schwartz D.C."/>
            <person name="Welch R.A."/>
            <person name="Blattner F.R."/>
        </authorList>
    </citation>
    <scope>NUCLEOTIDE SEQUENCE [LARGE SCALE GENOMIC DNA]</scope>
    <source>
        <strain>O157:H7 / EDL933 / ATCC 700927 / EHEC</strain>
    </source>
</reference>
<reference key="2">
    <citation type="journal article" date="2001" name="DNA Res.">
        <title>Complete genome sequence of enterohemorrhagic Escherichia coli O157:H7 and genomic comparison with a laboratory strain K-12.</title>
        <authorList>
            <person name="Hayashi T."/>
            <person name="Makino K."/>
            <person name="Ohnishi M."/>
            <person name="Kurokawa K."/>
            <person name="Ishii K."/>
            <person name="Yokoyama K."/>
            <person name="Han C.-G."/>
            <person name="Ohtsubo E."/>
            <person name="Nakayama K."/>
            <person name="Murata T."/>
            <person name="Tanaka M."/>
            <person name="Tobe T."/>
            <person name="Iida T."/>
            <person name="Takami H."/>
            <person name="Honda T."/>
            <person name="Sasakawa C."/>
            <person name="Ogasawara N."/>
            <person name="Yasunaga T."/>
            <person name="Kuhara S."/>
            <person name="Shiba T."/>
            <person name="Hattori M."/>
            <person name="Shinagawa H."/>
        </authorList>
    </citation>
    <scope>NUCLEOTIDE SEQUENCE [LARGE SCALE GENOMIC DNA]</scope>
    <source>
        <strain>O157:H7 / Sakai / RIMD 0509952 / EHEC</strain>
    </source>
</reference>
<feature type="chain" id="PRO_0000056953" description="Dihydroneopterin triphosphate diphosphatase">
    <location>
        <begin position="1"/>
        <end position="150"/>
    </location>
</feature>
<feature type="domain" description="Nudix hydrolase" evidence="4">
    <location>
        <begin position="5"/>
        <end position="146"/>
    </location>
</feature>
<feature type="short sequence motif" description="Nudix box">
    <location>
        <begin position="41"/>
        <end position="62"/>
    </location>
</feature>
<feature type="binding site" evidence="1">
    <location>
        <position position="7"/>
    </location>
    <ligand>
        <name>substrate</name>
    </ligand>
</feature>
<feature type="binding site" evidence="1">
    <location>
        <position position="29"/>
    </location>
    <ligand>
        <name>substrate</name>
    </ligand>
</feature>
<feature type="binding site" evidence="1">
    <location>
        <position position="40"/>
    </location>
    <ligand>
        <name>substrate</name>
    </ligand>
</feature>
<feature type="binding site" evidence="1">
    <location>
        <position position="56"/>
    </location>
    <ligand>
        <name>Mg(2+)</name>
        <dbReference type="ChEBI" id="CHEBI:18420"/>
    </ligand>
</feature>
<feature type="binding site" evidence="1">
    <location>
        <position position="60"/>
    </location>
    <ligand>
        <name>Mg(2+)</name>
        <dbReference type="ChEBI" id="CHEBI:18420"/>
    </ligand>
</feature>
<feature type="binding site" evidence="3">
    <location>
        <begin position="81"/>
        <end position="84"/>
    </location>
    <ligand>
        <name>substrate</name>
    </ligand>
</feature>
<feature type="binding site" evidence="1">
    <location>
        <position position="117"/>
    </location>
    <ligand>
        <name>Mg(2+)</name>
        <dbReference type="ChEBI" id="CHEBI:18420"/>
    </ligand>
</feature>
<feature type="binding site" evidence="3">
    <location>
        <position position="135"/>
    </location>
    <ligand>
        <name>substrate</name>
    </ligand>
</feature>
<dbReference type="EC" id="3.6.1.67"/>
<dbReference type="EMBL" id="AE005174">
    <property type="protein sequence ID" value="AAG56855.1"/>
    <property type="molecule type" value="Genomic_DNA"/>
</dbReference>
<dbReference type="EMBL" id="BA000007">
    <property type="protein sequence ID" value="BAB35998.2"/>
    <property type="status" value="ALT_INIT"/>
    <property type="molecule type" value="Genomic_DNA"/>
</dbReference>
<dbReference type="PIR" id="C85799">
    <property type="entry name" value="C85799"/>
</dbReference>
<dbReference type="PIR" id="G90950">
    <property type="entry name" value="G90950"/>
</dbReference>
<dbReference type="RefSeq" id="NP_310602.1">
    <property type="nucleotide sequence ID" value="NC_002695.1"/>
</dbReference>
<dbReference type="RefSeq" id="WP_001300367.1">
    <property type="nucleotide sequence ID" value="NZ_VOAI01000010.1"/>
</dbReference>
<dbReference type="SMR" id="P0AFC1"/>
<dbReference type="STRING" id="155864.Z2917"/>
<dbReference type="GeneID" id="75202729"/>
<dbReference type="GeneID" id="914189"/>
<dbReference type="KEGG" id="ece:Z2917"/>
<dbReference type="KEGG" id="ecs:ECs_2575"/>
<dbReference type="PATRIC" id="fig|386585.9.peg.2699"/>
<dbReference type="eggNOG" id="COG0494">
    <property type="taxonomic scope" value="Bacteria"/>
</dbReference>
<dbReference type="HOGENOM" id="CLU_128620_0_0_6"/>
<dbReference type="OMA" id="TRNTEHW"/>
<dbReference type="Proteomes" id="UP000000558">
    <property type="component" value="Chromosome"/>
</dbReference>
<dbReference type="Proteomes" id="UP000002519">
    <property type="component" value="Chromosome"/>
</dbReference>
<dbReference type="GO" id="GO:0004081">
    <property type="term" value="F:bis(5'-nucleosyl)-tetraphosphatase (asymmetrical) activity"/>
    <property type="evidence" value="ECO:0007669"/>
    <property type="project" value="TreeGrafter"/>
</dbReference>
<dbReference type="GO" id="GO:0008828">
    <property type="term" value="F:dATP diphosphatase activity"/>
    <property type="evidence" value="ECO:0007669"/>
    <property type="project" value="InterPro"/>
</dbReference>
<dbReference type="GO" id="GO:0019177">
    <property type="term" value="F:dihydroneopterin triphosphate pyrophosphohydrolase activity"/>
    <property type="evidence" value="ECO:0007669"/>
    <property type="project" value="UniProtKB-EC"/>
</dbReference>
<dbReference type="GO" id="GO:0046872">
    <property type="term" value="F:metal ion binding"/>
    <property type="evidence" value="ECO:0007669"/>
    <property type="project" value="UniProtKB-KW"/>
</dbReference>
<dbReference type="GO" id="GO:0006167">
    <property type="term" value="P:AMP biosynthetic process"/>
    <property type="evidence" value="ECO:0007669"/>
    <property type="project" value="TreeGrafter"/>
</dbReference>
<dbReference type="GO" id="GO:0006754">
    <property type="term" value="P:ATP biosynthetic process"/>
    <property type="evidence" value="ECO:0007669"/>
    <property type="project" value="TreeGrafter"/>
</dbReference>
<dbReference type="GO" id="GO:0046656">
    <property type="term" value="P:folic acid biosynthetic process"/>
    <property type="evidence" value="ECO:0007669"/>
    <property type="project" value="UniProtKB-KW"/>
</dbReference>
<dbReference type="CDD" id="cd04664">
    <property type="entry name" value="NUDIX_DHNTPase_like"/>
    <property type="match status" value="1"/>
</dbReference>
<dbReference type="FunFam" id="3.90.79.10:FF:000041">
    <property type="entry name" value="Dihydroneopterin triphosphate pyrophosphatase"/>
    <property type="match status" value="1"/>
</dbReference>
<dbReference type="Gene3D" id="3.90.79.10">
    <property type="entry name" value="Nucleoside Triphosphate Pyrophosphohydrolase"/>
    <property type="match status" value="1"/>
</dbReference>
<dbReference type="InterPro" id="IPR003564">
    <property type="entry name" value="DHNTPase"/>
</dbReference>
<dbReference type="InterPro" id="IPR015797">
    <property type="entry name" value="NUDIX_hydrolase-like_dom_sf"/>
</dbReference>
<dbReference type="InterPro" id="IPR020084">
    <property type="entry name" value="NUDIX_hydrolase_CS"/>
</dbReference>
<dbReference type="InterPro" id="IPR000086">
    <property type="entry name" value="NUDIX_hydrolase_dom"/>
</dbReference>
<dbReference type="InterPro" id="IPR051325">
    <property type="entry name" value="Nudix_hydrolase_domain"/>
</dbReference>
<dbReference type="NCBIfam" id="NF006961">
    <property type="entry name" value="PRK09438.1"/>
    <property type="match status" value="1"/>
</dbReference>
<dbReference type="PANTHER" id="PTHR21340:SF0">
    <property type="entry name" value="BIS(5'-NUCLEOSYL)-TETRAPHOSPHATASE [ASYMMETRICAL]"/>
    <property type="match status" value="1"/>
</dbReference>
<dbReference type="PANTHER" id="PTHR21340">
    <property type="entry name" value="DIADENOSINE 5,5-P1,P4-TETRAPHOSPHATE PYROPHOSPHOHYDROLASE MUTT"/>
    <property type="match status" value="1"/>
</dbReference>
<dbReference type="Pfam" id="PF00293">
    <property type="entry name" value="NUDIX"/>
    <property type="match status" value="1"/>
</dbReference>
<dbReference type="PRINTS" id="PR01404">
    <property type="entry name" value="NPPPHYDRLASE"/>
</dbReference>
<dbReference type="SUPFAM" id="SSF55811">
    <property type="entry name" value="Nudix"/>
    <property type="match status" value="1"/>
</dbReference>
<dbReference type="PROSITE" id="PS51462">
    <property type="entry name" value="NUDIX"/>
    <property type="match status" value="1"/>
</dbReference>
<dbReference type="PROSITE" id="PS00893">
    <property type="entry name" value="NUDIX_BOX"/>
    <property type="match status" value="1"/>
</dbReference>
<gene>
    <name type="primary">nudB</name>
    <name type="ordered locus">Z2917</name>
    <name type="ordered locus">ECs2575</name>
</gene>
<name>NUDB_ECO57</name>
<protein>
    <recommendedName>
        <fullName>Dihydroneopterin triphosphate diphosphatase</fullName>
        <ecNumber>3.6.1.67</ecNumber>
    </recommendedName>
    <alternativeName>
        <fullName>Dihydroneopterin triphosphate pyrophosphatase</fullName>
    </alternativeName>
    <alternativeName>
        <fullName>dATP pyrophosphohydrolase</fullName>
    </alternativeName>
</protein>
<proteinExistence type="inferred from homology"/>
<keyword id="KW-0289">Folate biosynthesis</keyword>
<keyword id="KW-0378">Hydrolase</keyword>
<keyword id="KW-0460">Magnesium</keyword>
<keyword id="KW-0479">Metal-binding</keyword>
<keyword id="KW-1185">Reference proteome</keyword>
<organism>
    <name type="scientific">Escherichia coli O157:H7</name>
    <dbReference type="NCBI Taxonomy" id="83334"/>
    <lineage>
        <taxon>Bacteria</taxon>
        <taxon>Pseudomonadati</taxon>
        <taxon>Pseudomonadota</taxon>
        <taxon>Gammaproteobacteria</taxon>
        <taxon>Enterobacterales</taxon>
        <taxon>Enterobacteriaceae</taxon>
        <taxon>Escherichia</taxon>
    </lineage>
</organism>
<evidence type="ECO:0000250" key="1"/>
<evidence type="ECO:0000250" key="2">
    <source>
        <dbReference type="UniProtKB" id="P0AFC0"/>
    </source>
</evidence>
<evidence type="ECO:0000255" key="3"/>
<evidence type="ECO:0000255" key="4">
    <source>
        <dbReference type="PROSITE-ProRule" id="PRU00794"/>
    </source>
</evidence>
<evidence type="ECO:0000305" key="5"/>